<dbReference type="EMBL" id="CP000230">
    <property type="protein sequence ID" value="ABC21987.1"/>
    <property type="molecule type" value="Genomic_DNA"/>
</dbReference>
<dbReference type="RefSeq" id="WP_011388941.1">
    <property type="nucleotide sequence ID" value="NC_007643.1"/>
</dbReference>
<dbReference type="RefSeq" id="YP_426274.1">
    <property type="nucleotide sequence ID" value="NC_007643.1"/>
</dbReference>
<dbReference type="SMR" id="Q2RV58"/>
<dbReference type="STRING" id="269796.Rru_A1186"/>
<dbReference type="DNASU" id="3834696"/>
<dbReference type="EnsemblBacteria" id="ABC21987">
    <property type="protein sequence ID" value="ABC21987"/>
    <property type="gene ID" value="Rru_A1186"/>
</dbReference>
<dbReference type="KEGG" id="rru:Rru_A1186"/>
<dbReference type="PATRIC" id="fig|269796.9.peg.1250"/>
<dbReference type="eggNOG" id="COG0806">
    <property type="taxonomic scope" value="Bacteria"/>
</dbReference>
<dbReference type="HOGENOM" id="CLU_077636_0_1_5"/>
<dbReference type="PhylomeDB" id="Q2RV58"/>
<dbReference type="Proteomes" id="UP000001929">
    <property type="component" value="Chromosome"/>
</dbReference>
<dbReference type="GO" id="GO:0005737">
    <property type="term" value="C:cytoplasm"/>
    <property type="evidence" value="ECO:0007669"/>
    <property type="project" value="UniProtKB-SubCell"/>
</dbReference>
<dbReference type="GO" id="GO:0005840">
    <property type="term" value="C:ribosome"/>
    <property type="evidence" value="ECO:0007669"/>
    <property type="project" value="InterPro"/>
</dbReference>
<dbReference type="GO" id="GO:0043022">
    <property type="term" value="F:ribosome binding"/>
    <property type="evidence" value="ECO:0007669"/>
    <property type="project" value="InterPro"/>
</dbReference>
<dbReference type="GO" id="GO:0042274">
    <property type="term" value="P:ribosomal small subunit biogenesis"/>
    <property type="evidence" value="ECO:0007669"/>
    <property type="project" value="UniProtKB-UniRule"/>
</dbReference>
<dbReference type="GO" id="GO:0006364">
    <property type="term" value="P:rRNA processing"/>
    <property type="evidence" value="ECO:0007669"/>
    <property type="project" value="UniProtKB-UniRule"/>
</dbReference>
<dbReference type="Gene3D" id="2.30.30.240">
    <property type="entry name" value="PRC-barrel domain"/>
    <property type="match status" value="1"/>
</dbReference>
<dbReference type="Gene3D" id="2.40.30.60">
    <property type="entry name" value="RimM"/>
    <property type="match status" value="1"/>
</dbReference>
<dbReference type="HAMAP" id="MF_00014">
    <property type="entry name" value="Ribosome_mat_RimM"/>
    <property type="match status" value="1"/>
</dbReference>
<dbReference type="InterPro" id="IPR011033">
    <property type="entry name" value="PRC_barrel-like_sf"/>
</dbReference>
<dbReference type="InterPro" id="IPR056792">
    <property type="entry name" value="PRC_RimM"/>
</dbReference>
<dbReference type="InterPro" id="IPR011961">
    <property type="entry name" value="RimM"/>
</dbReference>
<dbReference type="InterPro" id="IPR002676">
    <property type="entry name" value="RimM_N"/>
</dbReference>
<dbReference type="InterPro" id="IPR036976">
    <property type="entry name" value="RimM_N_sf"/>
</dbReference>
<dbReference type="InterPro" id="IPR009000">
    <property type="entry name" value="Transl_B-barrel_sf"/>
</dbReference>
<dbReference type="NCBIfam" id="TIGR02273">
    <property type="entry name" value="16S_RimM"/>
    <property type="match status" value="1"/>
</dbReference>
<dbReference type="PANTHER" id="PTHR33692">
    <property type="entry name" value="RIBOSOME MATURATION FACTOR RIMM"/>
    <property type="match status" value="1"/>
</dbReference>
<dbReference type="PANTHER" id="PTHR33692:SF1">
    <property type="entry name" value="RIBOSOME MATURATION FACTOR RIMM"/>
    <property type="match status" value="1"/>
</dbReference>
<dbReference type="Pfam" id="PF24986">
    <property type="entry name" value="PRC_RimM"/>
    <property type="match status" value="1"/>
</dbReference>
<dbReference type="Pfam" id="PF01782">
    <property type="entry name" value="RimM"/>
    <property type="match status" value="1"/>
</dbReference>
<dbReference type="SUPFAM" id="SSF50346">
    <property type="entry name" value="PRC-barrel domain"/>
    <property type="match status" value="1"/>
</dbReference>
<dbReference type="SUPFAM" id="SSF50447">
    <property type="entry name" value="Translation proteins"/>
    <property type="match status" value="1"/>
</dbReference>
<organism>
    <name type="scientific">Rhodospirillum rubrum (strain ATCC 11170 / ATH 1.1.1 / DSM 467 / LMG 4362 / NCIMB 8255 / S1)</name>
    <dbReference type="NCBI Taxonomy" id="269796"/>
    <lineage>
        <taxon>Bacteria</taxon>
        <taxon>Pseudomonadati</taxon>
        <taxon>Pseudomonadota</taxon>
        <taxon>Alphaproteobacteria</taxon>
        <taxon>Rhodospirillales</taxon>
        <taxon>Rhodospirillaceae</taxon>
        <taxon>Rhodospirillum</taxon>
    </lineage>
</organism>
<evidence type="ECO:0000255" key="1">
    <source>
        <dbReference type="HAMAP-Rule" id="MF_00014"/>
    </source>
</evidence>
<evidence type="ECO:0000256" key="2">
    <source>
        <dbReference type="SAM" id="MobiDB-lite"/>
    </source>
</evidence>
<sequence length="201" mass="21166">MTERLLVGVIVGSHGVRGLVRVKSFTQDEMALCDYGPLSDETGTRRFAVEVRNQAKGVVICQIPGVSDRTAADALKGTRLFLDRAALPADALEEDEYYHADLIGLPVDLVDGGRLGVVHSVHDFGAGDMLEVTLAQGRRSVLLPFTKAVVPLVDVKAGRLVADPPLGLLDDTRPPAGVEGEVEEDPGVGIDEDGDGKGGAS</sequence>
<protein>
    <recommendedName>
        <fullName evidence="1">Ribosome maturation factor RimM</fullName>
    </recommendedName>
</protein>
<keyword id="KW-0143">Chaperone</keyword>
<keyword id="KW-0963">Cytoplasm</keyword>
<keyword id="KW-1185">Reference proteome</keyword>
<keyword id="KW-0690">Ribosome biogenesis</keyword>
<keyword id="KW-0698">rRNA processing</keyword>
<accession>Q2RV58</accession>
<comment type="function">
    <text evidence="1">An accessory protein needed during the final step in the assembly of 30S ribosomal subunit, possibly for assembly of the head region. Essential for efficient processing of 16S rRNA. May be needed both before and after RbfA during the maturation of 16S rRNA. It has affinity for free ribosomal 30S subunits but not for 70S ribosomes.</text>
</comment>
<comment type="subunit">
    <text evidence="1">Binds ribosomal protein uS19.</text>
</comment>
<comment type="subcellular location">
    <subcellularLocation>
        <location evidence="1">Cytoplasm</location>
    </subcellularLocation>
</comment>
<comment type="domain">
    <text evidence="1">The PRC barrel domain binds ribosomal protein uS19.</text>
</comment>
<comment type="similarity">
    <text evidence="1">Belongs to the RimM family.</text>
</comment>
<reference key="1">
    <citation type="journal article" date="2011" name="Stand. Genomic Sci.">
        <title>Complete genome sequence of Rhodospirillum rubrum type strain (S1).</title>
        <authorList>
            <person name="Munk A.C."/>
            <person name="Copeland A."/>
            <person name="Lucas S."/>
            <person name="Lapidus A."/>
            <person name="Del Rio T.G."/>
            <person name="Barry K."/>
            <person name="Detter J.C."/>
            <person name="Hammon N."/>
            <person name="Israni S."/>
            <person name="Pitluck S."/>
            <person name="Brettin T."/>
            <person name="Bruce D."/>
            <person name="Han C."/>
            <person name="Tapia R."/>
            <person name="Gilna P."/>
            <person name="Schmutz J."/>
            <person name="Larimer F."/>
            <person name="Land M."/>
            <person name="Kyrpides N.C."/>
            <person name="Mavromatis K."/>
            <person name="Richardson P."/>
            <person name="Rohde M."/>
            <person name="Goeker M."/>
            <person name="Klenk H.P."/>
            <person name="Zhang Y."/>
            <person name="Roberts G.P."/>
            <person name="Reslewic S."/>
            <person name="Schwartz D.C."/>
        </authorList>
    </citation>
    <scope>NUCLEOTIDE SEQUENCE [LARGE SCALE GENOMIC DNA]</scope>
    <source>
        <strain>ATCC 11170 / ATH 1.1.1 / DSM 467 / LMG 4362 / NCIMB 8255 / S1</strain>
    </source>
</reference>
<proteinExistence type="inferred from homology"/>
<gene>
    <name evidence="1" type="primary">rimM</name>
    <name type="ordered locus">Rru_A1186</name>
</gene>
<name>RIMM_RHORT</name>
<feature type="chain" id="PRO_0000244160" description="Ribosome maturation factor RimM">
    <location>
        <begin position="1"/>
        <end position="201"/>
    </location>
</feature>
<feature type="domain" description="PRC barrel" evidence="1">
    <location>
        <begin position="94"/>
        <end position="168"/>
    </location>
</feature>
<feature type="region of interest" description="Disordered" evidence="2">
    <location>
        <begin position="164"/>
        <end position="201"/>
    </location>
</feature>
<feature type="compositionally biased region" description="Acidic residues" evidence="2">
    <location>
        <begin position="180"/>
        <end position="194"/>
    </location>
</feature>